<comment type="function">
    <text evidence="1">Cell wall formation. Catalyzes the addition of glutamate to the nucleotide precursor UDP-N-acetylmuramoyl-L-alanine (UMA).</text>
</comment>
<comment type="catalytic activity">
    <reaction evidence="1">
        <text>UDP-N-acetyl-alpha-D-muramoyl-L-alanine + D-glutamate + ATP = UDP-N-acetyl-alpha-D-muramoyl-L-alanyl-D-glutamate + ADP + phosphate + H(+)</text>
        <dbReference type="Rhea" id="RHEA:16429"/>
        <dbReference type="ChEBI" id="CHEBI:15378"/>
        <dbReference type="ChEBI" id="CHEBI:29986"/>
        <dbReference type="ChEBI" id="CHEBI:30616"/>
        <dbReference type="ChEBI" id="CHEBI:43474"/>
        <dbReference type="ChEBI" id="CHEBI:83898"/>
        <dbReference type="ChEBI" id="CHEBI:83900"/>
        <dbReference type="ChEBI" id="CHEBI:456216"/>
        <dbReference type="EC" id="6.3.2.9"/>
    </reaction>
</comment>
<comment type="pathway">
    <text evidence="1">Cell wall biogenesis; peptidoglycan biosynthesis.</text>
</comment>
<comment type="subcellular location">
    <subcellularLocation>
        <location evidence="1">Cytoplasm</location>
    </subcellularLocation>
</comment>
<comment type="similarity">
    <text evidence="1">Belongs to the MurCDEF family.</text>
</comment>
<feature type="chain" id="PRO_1000130843" description="UDP-N-acetylmuramoylalanine--D-glutamate ligase">
    <location>
        <begin position="1"/>
        <end position="458"/>
    </location>
</feature>
<feature type="binding site" evidence="1">
    <location>
        <begin position="124"/>
        <end position="130"/>
    </location>
    <ligand>
        <name>ATP</name>
        <dbReference type="ChEBI" id="CHEBI:30616"/>
    </ligand>
</feature>
<evidence type="ECO:0000255" key="1">
    <source>
        <dbReference type="HAMAP-Rule" id="MF_00639"/>
    </source>
</evidence>
<sequence>MKEDFKKFKEFIYKKRVGVVGIGVSNIPLINFLIKLGAEVTAFDKKTEEELGEVSSDFKNKGVNLELGDNYLDKLTGFDVVFKTPSMRIDSECLVKVKKEGAYVTSEMEEFVRYCKAKIYGITGSDGKTTTTTIISKILQEEGYKTWVGGNIGTPLFAQIEEIKAEDRVVLELSSFQLMTMNLPMDIAVCTNLAPNHLDMHKDMQEYIDAKKNIFLYQGSTNTLVVNRENEITYGFEAEAKGEVREFSSKREVKEGAYYKDGILYLSGKEVCKKDNIVIKGMHNVENYLAAFIATKDDVSIENMKKVAESFNGVEHRCELVREINGVKYYNDSIASSPNRTLAGLKAFDKKVILIAGGYDKHLLFEPLANEGYPYIKELILLGQTKEKIKDVFKDLEASKGIKINISEVSTLEEAVKKAQDLAKQGDIITLSPACASFDMFPNFMIRGNKFKEIVNEL</sequence>
<reference key="1">
    <citation type="submission" date="2008-05" db="EMBL/GenBank/DDBJ databases">
        <title>Complete genome sequence of Clostridium botulinum E3 str. Alaska E43.</title>
        <authorList>
            <person name="Brinkac L.M."/>
            <person name="Brown J.L."/>
            <person name="Bruce D."/>
            <person name="Detter C."/>
            <person name="Munk C."/>
            <person name="Smith L.A."/>
            <person name="Smith T.J."/>
            <person name="Sutton G."/>
            <person name="Brettin T.S."/>
        </authorList>
    </citation>
    <scope>NUCLEOTIDE SEQUENCE [LARGE SCALE GENOMIC DNA]</scope>
    <source>
        <strain>Alaska E43 / Type E3</strain>
    </source>
</reference>
<gene>
    <name evidence="1" type="primary">murD</name>
    <name type="ordered locus">CLH_0181</name>
</gene>
<accession>B2UXV7</accession>
<protein>
    <recommendedName>
        <fullName evidence="1">UDP-N-acetylmuramoylalanine--D-glutamate ligase</fullName>
        <ecNumber evidence="1">6.3.2.9</ecNumber>
    </recommendedName>
    <alternativeName>
        <fullName evidence="1">D-glutamic acid-adding enzyme</fullName>
    </alternativeName>
    <alternativeName>
        <fullName evidence="1">UDP-N-acetylmuramoyl-L-alanyl-D-glutamate synthetase</fullName>
    </alternativeName>
</protein>
<keyword id="KW-0067">ATP-binding</keyword>
<keyword id="KW-0131">Cell cycle</keyword>
<keyword id="KW-0132">Cell division</keyword>
<keyword id="KW-0133">Cell shape</keyword>
<keyword id="KW-0961">Cell wall biogenesis/degradation</keyword>
<keyword id="KW-0963">Cytoplasm</keyword>
<keyword id="KW-0436">Ligase</keyword>
<keyword id="KW-0547">Nucleotide-binding</keyword>
<keyword id="KW-0573">Peptidoglycan synthesis</keyword>
<dbReference type="EC" id="6.3.2.9" evidence="1"/>
<dbReference type="EMBL" id="CP001078">
    <property type="protein sequence ID" value="ACD51236.1"/>
    <property type="molecule type" value="Genomic_DNA"/>
</dbReference>
<dbReference type="RefSeq" id="WP_012449637.1">
    <property type="nucleotide sequence ID" value="NC_010723.1"/>
</dbReference>
<dbReference type="SMR" id="B2UXV7"/>
<dbReference type="KEGG" id="cbt:CLH_0181"/>
<dbReference type="HOGENOM" id="CLU_032540_0_1_9"/>
<dbReference type="UniPathway" id="UPA00219"/>
<dbReference type="GO" id="GO:0005737">
    <property type="term" value="C:cytoplasm"/>
    <property type="evidence" value="ECO:0007669"/>
    <property type="project" value="UniProtKB-SubCell"/>
</dbReference>
<dbReference type="GO" id="GO:0005524">
    <property type="term" value="F:ATP binding"/>
    <property type="evidence" value="ECO:0007669"/>
    <property type="project" value="UniProtKB-UniRule"/>
</dbReference>
<dbReference type="GO" id="GO:0008764">
    <property type="term" value="F:UDP-N-acetylmuramoylalanine-D-glutamate ligase activity"/>
    <property type="evidence" value="ECO:0007669"/>
    <property type="project" value="UniProtKB-UniRule"/>
</dbReference>
<dbReference type="GO" id="GO:0051301">
    <property type="term" value="P:cell division"/>
    <property type="evidence" value="ECO:0007669"/>
    <property type="project" value="UniProtKB-KW"/>
</dbReference>
<dbReference type="GO" id="GO:0071555">
    <property type="term" value="P:cell wall organization"/>
    <property type="evidence" value="ECO:0007669"/>
    <property type="project" value="UniProtKB-KW"/>
</dbReference>
<dbReference type="GO" id="GO:0009252">
    <property type="term" value="P:peptidoglycan biosynthetic process"/>
    <property type="evidence" value="ECO:0007669"/>
    <property type="project" value="UniProtKB-UniRule"/>
</dbReference>
<dbReference type="GO" id="GO:0008360">
    <property type="term" value="P:regulation of cell shape"/>
    <property type="evidence" value="ECO:0007669"/>
    <property type="project" value="UniProtKB-KW"/>
</dbReference>
<dbReference type="Gene3D" id="3.90.190.20">
    <property type="entry name" value="Mur ligase, C-terminal domain"/>
    <property type="match status" value="1"/>
</dbReference>
<dbReference type="Gene3D" id="3.40.1190.10">
    <property type="entry name" value="Mur-like, catalytic domain"/>
    <property type="match status" value="1"/>
</dbReference>
<dbReference type="Gene3D" id="3.40.50.720">
    <property type="entry name" value="NAD(P)-binding Rossmann-like Domain"/>
    <property type="match status" value="1"/>
</dbReference>
<dbReference type="HAMAP" id="MF_00639">
    <property type="entry name" value="MurD"/>
    <property type="match status" value="1"/>
</dbReference>
<dbReference type="InterPro" id="IPR036565">
    <property type="entry name" value="Mur-like_cat_sf"/>
</dbReference>
<dbReference type="InterPro" id="IPR004101">
    <property type="entry name" value="Mur_ligase_C"/>
</dbReference>
<dbReference type="InterPro" id="IPR036615">
    <property type="entry name" value="Mur_ligase_C_dom_sf"/>
</dbReference>
<dbReference type="InterPro" id="IPR013221">
    <property type="entry name" value="Mur_ligase_cen"/>
</dbReference>
<dbReference type="InterPro" id="IPR005762">
    <property type="entry name" value="MurD"/>
</dbReference>
<dbReference type="NCBIfam" id="TIGR01087">
    <property type="entry name" value="murD"/>
    <property type="match status" value="1"/>
</dbReference>
<dbReference type="PANTHER" id="PTHR43692">
    <property type="entry name" value="UDP-N-ACETYLMURAMOYLALANINE--D-GLUTAMATE LIGASE"/>
    <property type="match status" value="1"/>
</dbReference>
<dbReference type="PANTHER" id="PTHR43692:SF1">
    <property type="entry name" value="UDP-N-ACETYLMURAMOYLALANINE--D-GLUTAMATE LIGASE"/>
    <property type="match status" value="1"/>
</dbReference>
<dbReference type="Pfam" id="PF02875">
    <property type="entry name" value="Mur_ligase_C"/>
    <property type="match status" value="1"/>
</dbReference>
<dbReference type="Pfam" id="PF08245">
    <property type="entry name" value="Mur_ligase_M"/>
    <property type="match status" value="1"/>
</dbReference>
<dbReference type="SUPFAM" id="SSF51984">
    <property type="entry name" value="MurCD N-terminal domain"/>
    <property type="match status" value="1"/>
</dbReference>
<dbReference type="SUPFAM" id="SSF53623">
    <property type="entry name" value="MurD-like peptide ligases, catalytic domain"/>
    <property type="match status" value="1"/>
</dbReference>
<dbReference type="SUPFAM" id="SSF53244">
    <property type="entry name" value="MurD-like peptide ligases, peptide-binding domain"/>
    <property type="match status" value="1"/>
</dbReference>
<organism>
    <name type="scientific">Clostridium botulinum (strain Alaska E43 / Type E3)</name>
    <dbReference type="NCBI Taxonomy" id="508767"/>
    <lineage>
        <taxon>Bacteria</taxon>
        <taxon>Bacillati</taxon>
        <taxon>Bacillota</taxon>
        <taxon>Clostridia</taxon>
        <taxon>Eubacteriales</taxon>
        <taxon>Clostridiaceae</taxon>
        <taxon>Clostridium</taxon>
    </lineage>
</organism>
<proteinExistence type="inferred from homology"/>
<name>MURD_CLOBA</name>